<name>RCF1_PARBP</name>
<accession>C0RYW2</accession>
<gene>
    <name type="primary">RCF1</name>
    <name type="synonym">AIM31</name>
    <name type="ORF">PABG_00617</name>
</gene>
<dbReference type="EMBL" id="KN305531">
    <property type="protein sequence ID" value="EEH18054.1"/>
    <property type="molecule type" value="Genomic_DNA"/>
</dbReference>
<dbReference type="SMR" id="C0RYW2"/>
<dbReference type="VEuPathDB" id="FungiDB:PABG_00617"/>
<dbReference type="HOGENOM" id="CLU_087356_0_2_1"/>
<dbReference type="OrthoDB" id="5793at33183"/>
<dbReference type="GO" id="GO:0031966">
    <property type="term" value="C:mitochondrial membrane"/>
    <property type="evidence" value="ECO:0007669"/>
    <property type="project" value="UniProtKB-SubCell"/>
</dbReference>
<dbReference type="GO" id="GO:0097250">
    <property type="term" value="P:mitochondrial respirasome assembly"/>
    <property type="evidence" value="ECO:0007669"/>
    <property type="project" value="TreeGrafter"/>
</dbReference>
<dbReference type="InterPro" id="IPR007667">
    <property type="entry name" value="Hypoxia_induced_domain"/>
</dbReference>
<dbReference type="InterPro" id="IPR050355">
    <property type="entry name" value="RCF1"/>
</dbReference>
<dbReference type="PANTHER" id="PTHR12297:SF3">
    <property type="entry name" value="HIG1 DOMAIN FAMILY MEMBER 1A"/>
    <property type="match status" value="1"/>
</dbReference>
<dbReference type="PANTHER" id="PTHR12297">
    <property type="entry name" value="HYPOXIA-INDUCBILE GENE 1 HIG1 -RELATED"/>
    <property type="match status" value="1"/>
</dbReference>
<dbReference type="Pfam" id="PF04588">
    <property type="entry name" value="HIG_1_N"/>
    <property type="match status" value="1"/>
</dbReference>
<dbReference type="PROSITE" id="PS51503">
    <property type="entry name" value="HIG1"/>
    <property type="match status" value="1"/>
</dbReference>
<protein>
    <recommendedName>
        <fullName>Respiratory supercomplex factor 1, mitochondrial</fullName>
    </recommendedName>
</protein>
<comment type="function">
    <text evidence="1">Cytochrome c oxidase subunit which plays a role in assembly of respiratory supercomplexes.</text>
</comment>
<comment type="subunit">
    <text evidence="1">Associates with the respiratory chain complex III/complex IV supercomplex.</text>
</comment>
<comment type="subcellular location">
    <subcellularLocation>
        <location evidence="3">Mitochondrion membrane</location>
        <topology evidence="3">Multi-pass membrane protein</topology>
    </subcellularLocation>
</comment>
<comment type="similarity">
    <text evidence="4">Belongs to the RCF1 family.</text>
</comment>
<evidence type="ECO:0000250" key="1"/>
<evidence type="ECO:0000255" key="2"/>
<evidence type="ECO:0000255" key="3">
    <source>
        <dbReference type="PROSITE-ProRule" id="PRU00836"/>
    </source>
</evidence>
<evidence type="ECO:0000305" key="4"/>
<sequence>MSNTSLPSSFDSHPEFFQETKWQKFTRRIKEEPLIPIGYAATSYALWRAYKSMKAGDSIELNRMFRARIYGHAFTLFAIVAGGIYYGNERRQRKEFEKALQEKSNQQKRDSWLRELEIRDKEDKDWRQRHAAIEAAAKEAEKKG</sequence>
<reference key="1">
    <citation type="journal article" date="2011" name="PLoS Genet.">
        <title>Comparative genomic analysis of human fungal pathogens causing paracoccidioidomycosis.</title>
        <authorList>
            <person name="Desjardins C.A."/>
            <person name="Champion M.D."/>
            <person name="Holder J.W."/>
            <person name="Muszewska A."/>
            <person name="Goldberg J."/>
            <person name="Bailao A.M."/>
            <person name="Brigido M.M."/>
            <person name="Ferreira M.E."/>
            <person name="Garcia A.M."/>
            <person name="Grynberg M."/>
            <person name="Gujja S."/>
            <person name="Heiman D.I."/>
            <person name="Henn M.R."/>
            <person name="Kodira C.D."/>
            <person name="Leon-Narvaez H."/>
            <person name="Longo L.V.G."/>
            <person name="Ma L.-J."/>
            <person name="Malavazi I."/>
            <person name="Matsuo A.L."/>
            <person name="Morais F.V."/>
            <person name="Pereira M."/>
            <person name="Rodriguez-Brito S."/>
            <person name="Sakthikumar S."/>
            <person name="Salem-Izacc S.M."/>
            <person name="Sykes S.M."/>
            <person name="Teixeira M.M."/>
            <person name="Vallejo M.C."/>
            <person name="Walter M.E."/>
            <person name="Yandava C."/>
            <person name="Young S."/>
            <person name="Zeng Q."/>
            <person name="Zucker J."/>
            <person name="Felipe M.S."/>
            <person name="Goldman G.H."/>
            <person name="Haas B.J."/>
            <person name="McEwen J.G."/>
            <person name="Nino-Vega G."/>
            <person name="Puccia R."/>
            <person name="San-Blas G."/>
            <person name="Soares C.M."/>
            <person name="Birren B.W."/>
            <person name="Cuomo C.A."/>
        </authorList>
    </citation>
    <scope>NUCLEOTIDE SEQUENCE [LARGE SCALE GENOMIC DNA]</scope>
    <source>
        <strain>Pb03</strain>
    </source>
</reference>
<proteinExistence type="inferred from homology"/>
<organism>
    <name type="scientific">Paracoccidioides brasiliensis (strain Pb03)</name>
    <dbReference type="NCBI Taxonomy" id="482561"/>
    <lineage>
        <taxon>Eukaryota</taxon>
        <taxon>Fungi</taxon>
        <taxon>Dikarya</taxon>
        <taxon>Ascomycota</taxon>
        <taxon>Pezizomycotina</taxon>
        <taxon>Eurotiomycetes</taxon>
        <taxon>Eurotiomycetidae</taxon>
        <taxon>Onygenales</taxon>
        <taxon>Ajellomycetaceae</taxon>
        <taxon>Paracoccidioides</taxon>
    </lineage>
</organism>
<keyword id="KW-0175">Coiled coil</keyword>
<keyword id="KW-0472">Membrane</keyword>
<keyword id="KW-0496">Mitochondrion</keyword>
<keyword id="KW-0812">Transmembrane</keyword>
<keyword id="KW-1133">Transmembrane helix</keyword>
<feature type="chain" id="PRO_0000399643" description="Respiratory supercomplex factor 1, mitochondrial">
    <location>
        <begin position="1"/>
        <end position="144"/>
    </location>
</feature>
<feature type="transmembrane region" description="Helical" evidence="3">
    <location>
        <begin position="33"/>
        <end position="50"/>
    </location>
</feature>
<feature type="transmembrane region" description="Helical" evidence="3">
    <location>
        <begin position="69"/>
        <end position="88"/>
    </location>
</feature>
<feature type="domain" description="HIG1" evidence="3">
    <location>
        <begin position="6"/>
        <end position="97"/>
    </location>
</feature>
<feature type="coiled-coil region" evidence="2">
    <location>
        <begin position="86"/>
        <end position="142"/>
    </location>
</feature>